<comment type="function">
    <text>May be involved in transcriptional regulation.</text>
</comment>
<comment type="subcellular location">
    <subcellularLocation>
        <location evidence="2">Nucleus</location>
    </subcellularLocation>
</comment>
<comment type="similarity">
    <text evidence="2">Belongs to the krueppel C2H2-type zinc-finger protein family.</text>
</comment>
<reference key="1">
    <citation type="journal article" date="1989" name="J. Mol. Biol.">
        <title>Second-order repeats in Xenopus laevis finger proteins.</title>
        <authorList>
            <person name="Nietfeld W."/>
            <person name="El-Baradi T."/>
            <person name="Mentzel H."/>
            <person name="Pieler T."/>
            <person name="Koester M."/>
            <person name="Poeting A."/>
            <person name="Knoechel W."/>
        </authorList>
    </citation>
    <scope>NUCLEOTIDE SEQUENCE</scope>
</reference>
<accession>P18726</accession>
<feature type="chain" id="PRO_0000047798" description="Gastrula zinc finger protein XlCGF51.1A">
    <location>
        <begin position="1" status="less than"/>
        <end position="172" status="greater than"/>
    </location>
</feature>
<feature type="zinc finger region" description="C2H2-type 1" evidence="1">
    <location>
        <begin position="6"/>
        <end position="28"/>
    </location>
</feature>
<feature type="zinc finger region" description="C2H2-type 2" evidence="1">
    <location>
        <begin position="34"/>
        <end position="56"/>
    </location>
</feature>
<feature type="zinc finger region" description="C2H2-type 3" evidence="1">
    <location>
        <begin position="62"/>
        <end position="84"/>
    </location>
</feature>
<feature type="zinc finger region" description="C2H2-type 4" evidence="1">
    <location>
        <begin position="90"/>
        <end position="112"/>
    </location>
</feature>
<feature type="zinc finger region" description="C2H2-type 5" evidence="1">
    <location>
        <begin position="122"/>
        <end position="144"/>
    </location>
</feature>
<feature type="zinc finger region" description="C2H2-type 6" evidence="1">
    <location>
        <begin position="150"/>
        <end position="172"/>
    </location>
</feature>
<feature type="non-terminal residue">
    <location>
        <position position="1"/>
    </location>
</feature>
<feature type="non-terminal residue">
    <location>
        <position position="172"/>
    </location>
</feature>
<keyword id="KW-0238">DNA-binding</keyword>
<keyword id="KW-0479">Metal-binding</keyword>
<keyword id="KW-0539">Nucleus</keyword>
<keyword id="KW-1185">Reference proteome</keyword>
<keyword id="KW-0677">Repeat</keyword>
<keyword id="KW-0804">Transcription</keyword>
<keyword id="KW-0805">Transcription regulation</keyword>
<keyword id="KW-0862">Zinc</keyword>
<keyword id="KW-0863">Zinc-finger</keyword>
<evidence type="ECO:0000255" key="1">
    <source>
        <dbReference type="PROSITE-ProRule" id="PRU00042"/>
    </source>
</evidence>
<evidence type="ECO:0000305" key="2"/>
<proteinExistence type="inferred from homology"/>
<protein>
    <recommendedName>
        <fullName>Gastrula zinc finger protein XlCGF51.1A</fullName>
    </recommendedName>
</protein>
<sequence>TGEKPFSCSDCGARFTYRSLLRRHNKIHAEGKSLICSECGKPFTSESALTAHQRSHGGEKPFSCTDCEKCFAQRMHLIEHQRTHTGEKPFSCTVCGEMFTYRAQFSKHMLKHKRKRTEGESLDCSHCGKHFTSRSDLTVHRKSHKGKSPLQCSDCGKCFKYQSQLASHQRVH</sequence>
<dbReference type="PIR" id="S06575">
    <property type="entry name" value="S06575"/>
</dbReference>
<dbReference type="SMR" id="P18726"/>
<dbReference type="Proteomes" id="UP000186698">
    <property type="component" value="Unplaced"/>
</dbReference>
<dbReference type="GO" id="GO:0005634">
    <property type="term" value="C:nucleus"/>
    <property type="evidence" value="ECO:0007669"/>
    <property type="project" value="UniProtKB-SubCell"/>
</dbReference>
<dbReference type="GO" id="GO:0000981">
    <property type="term" value="F:DNA-binding transcription factor activity, RNA polymerase II-specific"/>
    <property type="evidence" value="ECO:0007669"/>
    <property type="project" value="TreeGrafter"/>
</dbReference>
<dbReference type="GO" id="GO:0000977">
    <property type="term" value="F:RNA polymerase II transcription regulatory region sequence-specific DNA binding"/>
    <property type="evidence" value="ECO:0007669"/>
    <property type="project" value="TreeGrafter"/>
</dbReference>
<dbReference type="GO" id="GO:0008270">
    <property type="term" value="F:zinc ion binding"/>
    <property type="evidence" value="ECO:0007669"/>
    <property type="project" value="UniProtKB-KW"/>
</dbReference>
<dbReference type="FunFam" id="3.30.160.60:FF:001155">
    <property type="entry name" value="Zinc finger 30C"/>
    <property type="match status" value="1"/>
</dbReference>
<dbReference type="FunFam" id="3.30.160.60:FF:000478">
    <property type="entry name" value="Zinc finger protein 133"/>
    <property type="match status" value="1"/>
</dbReference>
<dbReference type="FunFam" id="3.30.160.60:FF:001009">
    <property type="entry name" value="Zinc finger protein 26"/>
    <property type="match status" value="1"/>
</dbReference>
<dbReference type="FunFam" id="3.30.160.60:FF:001326">
    <property type="entry name" value="Zinc finger protein 432"/>
    <property type="match status" value="1"/>
</dbReference>
<dbReference type="FunFam" id="3.30.160.60:FF:000624">
    <property type="entry name" value="zinc finger protein 697"/>
    <property type="match status" value="1"/>
</dbReference>
<dbReference type="Gene3D" id="3.30.160.60">
    <property type="entry name" value="Classic Zinc Finger"/>
    <property type="match status" value="6"/>
</dbReference>
<dbReference type="InterPro" id="IPR036236">
    <property type="entry name" value="Znf_C2H2_sf"/>
</dbReference>
<dbReference type="InterPro" id="IPR013087">
    <property type="entry name" value="Znf_C2H2_type"/>
</dbReference>
<dbReference type="PANTHER" id="PTHR24409">
    <property type="entry name" value="ZINC FINGER PROTEIN 142"/>
    <property type="match status" value="1"/>
</dbReference>
<dbReference type="PANTHER" id="PTHR24409:SF331">
    <property type="entry name" value="ZINC FINGER PROTEIN 322A"/>
    <property type="match status" value="1"/>
</dbReference>
<dbReference type="Pfam" id="PF00096">
    <property type="entry name" value="zf-C2H2"/>
    <property type="match status" value="6"/>
</dbReference>
<dbReference type="SMART" id="SM00355">
    <property type="entry name" value="ZnF_C2H2"/>
    <property type="match status" value="6"/>
</dbReference>
<dbReference type="SUPFAM" id="SSF57667">
    <property type="entry name" value="beta-beta-alpha zinc fingers"/>
    <property type="match status" value="3"/>
</dbReference>
<dbReference type="PROSITE" id="PS00028">
    <property type="entry name" value="ZINC_FINGER_C2H2_1"/>
    <property type="match status" value="6"/>
</dbReference>
<dbReference type="PROSITE" id="PS50157">
    <property type="entry name" value="ZINC_FINGER_C2H2_2"/>
    <property type="match status" value="6"/>
</dbReference>
<organism>
    <name type="scientific">Xenopus laevis</name>
    <name type="common">African clawed frog</name>
    <dbReference type="NCBI Taxonomy" id="8355"/>
    <lineage>
        <taxon>Eukaryota</taxon>
        <taxon>Metazoa</taxon>
        <taxon>Chordata</taxon>
        <taxon>Craniata</taxon>
        <taxon>Vertebrata</taxon>
        <taxon>Euteleostomi</taxon>
        <taxon>Amphibia</taxon>
        <taxon>Batrachia</taxon>
        <taxon>Anura</taxon>
        <taxon>Pipoidea</taxon>
        <taxon>Pipidae</taxon>
        <taxon>Xenopodinae</taxon>
        <taxon>Xenopus</taxon>
        <taxon>Xenopus</taxon>
    </lineage>
</organism>
<name>ZG5A_XENLA</name>